<sequence length="1361" mass="149555">MEHYLRSVHNSPTLSMISAARGLSPAEVAHEHLKERGIYGLAPPPPPGTTPTEYCHQMAFLASHASPYGELLVQSAAAGNTSHLHDYLTPMDVSRFSSPRVTPRLSRKRALSISPLSDASIDLQTMIRTSPNSLVAYINNSRSSSAASGSYGHLSAGAISPAFSFPIHKPCSLSAALSQQRSLSSSFGHTPLLHPSPTFASRQQGALTSANPAPPSNNSSAPDSVLNKVSSESAVSSTVNQVIHKRSKVKTEEEADSVRFPQPPDHLTDLKEDLDKDECKQEPEHIYETNCHWDGCSKEFDTQDQLVHHINNDHIHGEKKEFVCRWQDCSREQKPFKAQYMLVVHMRRHTGEKPHKCTFEGCFKAYSRLENLKTHLRSHTGEKPYVCDHEGCNKAFSNASDRAKHQNRTHSNEKPYICKVPGCTKRYTDPSSLRKHVKTVHGPEAHVTKKHRNDIIQKPSLPKENGDNEASAKLSGREHSDSVSRDQEHCLQTRTIKTEDNMMHQSSPGGQSSCSSEPSPYGNTNNIDSGVDVSLAWQGSLGDLFGLEETSPVVDSTVSSWQRSGRPATPETQRIHSAETGTAEEREIKDNERFLLIYEPNATCQNTRLPTISANGFDVIGVPSSVLINPRAIELSMNDVTMMNQLNERRDSTSSTLSSAYTSRRSSGISPYFSSRRSSETSQFGGRLNNSSSADSYDPISTDASRRSSEASQHSGLPNLLNLTPAQHYRLKAKYAAATGGPPPTPLPNMDRIGLRNKLSLMDGADFPLPPFRQLPVPRRCSDGGGNAGLTPMYPHEIPGNNSRRASDPVRRTAGIDDKPLPRFSRFHSMNSMNTLHPPSLSERRNGGLQHYTCSDGGLHRHVYSPRPPSISENVAMEAISCDADVPGGDDDLMLPDDVVQYIRSQNREAPEQNLQTEYSSPARNLQSNTKSFHNNTPEQPRAPGAYLSRNFPALAECLGQTANMQDNNMPVQWNEVSSGTVDVSDLPKQQFAAGNLAVVQQKQNFAQYQSFNQAPMQRAHNIMGQGQESVQRNISVNGQRFNYLQQRQQQMSQCQIVSSDFIPQQRYSQSQSMLSSRAMQEGQSQISPSCNNMVERPGVHTHAAPSNTLNHQRLAVHGAPTQGFANNFSVNQDGLHPPNAYTVQPQKNGLEPQQNTLGMSGQAFNHGMIQPRPPAAPHPPNRPRNIHPVHHPPYMRSPHPVSELSPGQQTAEATPKRTSENTDPTPKDNNLLYYSGQIHMYEPNGNFGSGIDCTVRQLPTMPSPGANQVTSTVDSQGLEHPPVIDFDAMMDDGDHSSLMSGTLSPGLLQSFSQTSSRLTTPRNSLTLPSIPAGINNMAIGDMSSMLTTLAEESKFLNLMS</sequence>
<proteinExistence type="evidence at transcript level"/>
<gene>
    <name type="primary">gli4</name>
</gene>
<organism>
    <name type="scientific">Xenopus laevis</name>
    <name type="common">African clawed frog</name>
    <dbReference type="NCBI Taxonomy" id="8355"/>
    <lineage>
        <taxon>Eukaryota</taxon>
        <taxon>Metazoa</taxon>
        <taxon>Chordata</taxon>
        <taxon>Craniata</taxon>
        <taxon>Vertebrata</taxon>
        <taxon>Euteleostomi</taxon>
        <taxon>Amphibia</taxon>
        <taxon>Batrachia</taxon>
        <taxon>Anura</taxon>
        <taxon>Pipoidea</taxon>
        <taxon>Pipidae</taxon>
        <taxon>Xenopodinae</taxon>
        <taxon>Xenopus</taxon>
        <taxon>Xenopus</taxon>
    </lineage>
</organism>
<reference key="1">
    <citation type="journal article" date="1997" name="Mech. Dev.">
        <title>A role for Xenopus Gli-type zinc finger proteins in the early embryonic patterning of mesoderm and neuroectoderm.</title>
        <authorList>
            <person name="Marine J.C."/>
            <person name="Bellefroid E.J."/>
            <person name="Pendeville H."/>
            <person name="Martial J.A."/>
            <person name="Pieler T."/>
        </authorList>
    </citation>
    <scope>NUCLEOTIDE SEQUENCE [MRNA]</scope>
</reference>
<name>GLI4_XENLA</name>
<feature type="chain" id="PRO_0000047207" description="Zinc finger protein GLI4">
    <location>
        <begin position="1"/>
        <end position="1361"/>
    </location>
</feature>
<feature type="zinc finger region" description="C2H2-type 1" evidence="1">
    <location>
        <begin position="289"/>
        <end position="314"/>
    </location>
</feature>
<feature type="zinc finger region" description="C2H2-type 2" evidence="1">
    <location>
        <begin position="322"/>
        <end position="349"/>
    </location>
</feature>
<feature type="zinc finger region" description="C2H2-type 3" evidence="1">
    <location>
        <begin position="355"/>
        <end position="379"/>
    </location>
</feature>
<feature type="zinc finger region" description="C2H2-type 4" evidence="1">
    <location>
        <begin position="385"/>
        <end position="410"/>
    </location>
</feature>
<feature type="zinc finger region" description="C2H2-type 5" evidence="1">
    <location>
        <begin position="416"/>
        <end position="441"/>
    </location>
</feature>
<feature type="region of interest" description="Disordered" evidence="2">
    <location>
        <begin position="185"/>
        <end position="270"/>
    </location>
</feature>
<feature type="region of interest" description="Disordered" evidence="2">
    <location>
        <begin position="434"/>
        <end position="527"/>
    </location>
</feature>
<feature type="region of interest" description="Disordered" evidence="2">
    <location>
        <begin position="556"/>
        <end position="584"/>
    </location>
</feature>
<feature type="region of interest" description="Disordered" evidence="2">
    <location>
        <begin position="647"/>
        <end position="720"/>
    </location>
</feature>
<feature type="region of interest" description="Disordered" evidence="2">
    <location>
        <begin position="787"/>
        <end position="832"/>
    </location>
</feature>
<feature type="region of interest" description="Disordered" evidence="2">
    <location>
        <begin position="906"/>
        <end position="946"/>
    </location>
</feature>
<feature type="region of interest" description="Disordered" evidence="2">
    <location>
        <begin position="1134"/>
        <end position="1230"/>
    </location>
</feature>
<feature type="compositionally biased region" description="Polar residues" evidence="2">
    <location>
        <begin position="198"/>
        <end position="208"/>
    </location>
</feature>
<feature type="compositionally biased region" description="Polar residues" evidence="2">
    <location>
        <begin position="227"/>
        <end position="241"/>
    </location>
</feature>
<feature type="compositionally biased region" description="Basic and acidic residues" evidence="2">
    <location>
        <begin position="475"/>
        <end position="502"/>
    </location>
</feature>
<feature type="compositionally biased region" description="Low complexity" evidence="2">
    <location>
        <begin position="506"/>
        <end position="522"/>
    </location>
</feature>
<feature type="compositionally biased region" description="Basic and acidic residues" evidence="2">
    <location>
        <begin position="573"/>
        <end position="584"/>
    </location>
</feature>
<feature type="compositionally biased region" description="Low complexity" evidence="2">
    <location>
        <begin position="653"/>
        <end position="670"/>
    </location>
</feature>
<feature type="compositionally biased region" description="Polar residues" evidence="2">
    <location>
        <begin position="672"/>
        <end position="695"/>
    </location>
</feature>
<feature type="compositionally biased region" description="Polar residues" evidence="2">
    <location>
        <begin position="710"/>
        <end position="720"/>
    </location>
</feature>
<feature type="compositionally biased region" description="Basic and acidic residues" evidence="2">
    <location>
        <begin position="805"/>
        <end position="821"/>
    </location>
</feature>
<feature type="compositionally biased region" description="Polar residues" evidence="2">
    <location>
        <begin position="913"/>
        <end position="939"/>
    </location>
</feature>
<feature type="compositionally biased region" description="Polar residues" evidence="2">
    <location>
        <begin position="1142"/>
        <end position="1164"/>
    </location>
</feature>
<feature type="compositionally biased region" description="Pro residues" evidence="2">
    <location>
        <begin position="1172"/>
        <end position="1183"/>
    </location>
</feature>
<dbReference type="EMBL" id="U42462">
    <property type="protein sequence ID" value="AAA98467.1"/>
    <property type="molecule type" value="mRNA"/>
</dbReference>
<dbReference type="PIR" id="T30884">
    <property type="entry name" value="T30884"/>
</dbReference>
<dbReference type="RefSeq" id="NP_001081442.1">
    <property type="nucleotide sequence ID" value="NM_001087973.1"/>
</dbReference>
<dbReference type="SMR" id="Q91661"/>
<dbReference type="GeneID" id="397838"/>
<dbReference type="KEGG" id="xla:397838"/>
<dbReference type="AGR" id="Xenbase:XB-GENE-17342592"/>
<dbReference type="CTD" id="397838"/>
<dbReference type="Xenbase" id="XB-GENE-17342592">
    <property type="gene designation" value="gli2.L"/>
</dbReference>
<dbReference type="OrthoDB" id="3214149at2759"/>
<dbReference type="Proteomes" id="UP000186698">
    <property type="component" value="Chromosome 9_10L"/>
</dbReference>
<dbReference type="Bgee" id="397838">
    <property type="expression patterns" value="Expressed in neurula embryo and 17 other cell types or tissues"/>
</dbReference>
<dbReference type="GO" id="GO:0005634">
    <property type="term" value="C:nucleus"/>
    <property type="evidence" value="ECO:0000318"/>
    <property type="project" value="GO_Central"/>
</dbReference>
<dbReference type="GO" id="GO:0000981">
    <property type="term" value="F:DNA-binding transcription factor activity, RNA polymerase II-specific"/>
    <property type="evidence" value="ECO:0000318"/>
    <property type="project" value="GO_Central"/>
</dbReference>
<dbReference type="GO" id="GO:0000978">
    <property type="term" value="F:RNA polymerase II cis-regulatory region sequence-specific DNA binding"/>
    <property type="evidence" value="ECO:0000318"/>
    <property type="project" value="GO_Central"/>
</dbReference>
<dbReference type="GO" id="GO:0008270">
    <property type="term" value="F:zinc ion binding"/>
    <property type="evidence" value="ECO:0007669"/>
    <property type="project" value="UniProtKB-KW"/>
</dbReference>
<dbReference type="GO" id="GO:0006357">
    <property type="term" value="P:regulation of transcription by RNA polymerase II"/>
    <property type="evidence" value="ECO:0000318"/>
    <property type="project" value="GO_Central"/>
</dbReference>
<dbReference type="GO" id="GO:0007224">
    <property type="term" value="P:smoothened signaling pathway"/>
    <property type="evidence" value="ECO:0000318"/>
    <property type="project" value="GO_Central"/>
</dbReference>
<dbReference type="FunFam" id="3.30.160.60:FF:000019">
    <property type="entry name" value="GLI family zinc finger 3"/>
    <property type="match status" value="1"/>
</dbReference>
<dbReference type="FunFam" id="3.30.160.60:FF:000031">
    <property type="entry name" value="GLI family zinc finger 3"/>
    <property type="match status" value="1"/>
</dbReference>
<dbReference type="FunFam" id="3.30.160.60:FF:000036">
    <property type="entry name" value="GLI family zinc finger 3"/>
    <property type="match status" value="1"/>
</dbReference>
<dbReference type="FunFam" id="3.30.160.60:FF:000048">
    <property type="entry name" value="GLI family zinc finger 3"/>
    <property type="match status" value="1"/>
</dbReference>
<dbReference type="FunFam" id="3.30.160.60:FF:000068">
    <property type="entry name" value="GLI family zinc finger 3"/>
    <property type="match status" value="1"/>
</dbReference>
<dbReference type="Gene3D" id="3.30.160.60">
    <property type="entry name" value="Classic Zinc Finger"/>
    <property type="match status" value="5"/>
</dbReference>
<dbReference type="InterPro" id="IPR043359">
    <property type="entry name" value="GLI-like"/>
</dbReference>
<dbReference type="InterPro" id="IPR056436">
    <property type="entry name" value="Znf-C2H2_ZIC1-5/GLI1-3-like"/>
</dbReference>
<dbReference type="InterPro" id="IPR036236">
    <property type="entry name" value="Znf_C2H2_sf"/>
</dbReference>
<dbReference type="InterPro" id="IPR013087">
    <property type="entry name" value="Znf_C2H2_type"/>
</dbReference>
<dbReference type="PANTHER" id="PTHR45718">
    <property type="entry name" value="TRANSCRIPTIONAL ACTIVATOR CUBITUS INTERRUPTUS"/>
    <property type="match status" value="1"/>
</dbReference>
<dbReference type="PANTHER" id="PTHR45718:SF6">
    <property type="entry name" value="ZINC FINGER PROTEIN GLI2"/>
    <property type="match status" value="1"/>
</dbReference>
<dbReference type="Pfam" id="PF00096">
    <property type="entry name" value="zf-C2H2"/>
    <property type="match status" value="2"/>
</dbReference>
<dbReference type="Pfam" id="PF23561">
    <property type="entry name" value="zf-C2H2_15"/>
    <property type="match status" value="1"/>
</dbReference>
<dbReference type="SMART" id="SM00355">
    <property type="entry name" value="ZnF_C2H2"/>
    <property type="match status" value="5"/>
</dbReference>
<dbReference type="SUPFAM" id="SSF57667">
    <property type="entry name" value="beta-beta-alpha zinc fingers"/>
    <property type="match status" value="3"/>
</dbReference>
<dbReference type="PROSITE" id="PS00028">
    <property type="entry name" value="ZINC_FINGER_C2H2_1"/>
    <property type="match status" value="4"/>
</dbReference>
<dbReference type="PROSITE" id="PS50157">
    <property type="entry name" value="ZINC_FINGER_C2H2_2"/>
    <property type="match status" value="5"/>
</dbReference>
<keyword id="KW-0238">DNA-binding</keyword>
<keyword id="KW-0479">Metal-binding</keyword>
<keyword id="KW-0539">Nucleus</keyword>
<keyword id="KW-1185">Reference proteome</keyword>
<keyword id="KW-0677">Repeat</keyword>
<keyword id="KW-0804">Transcription</keyword>
<keyword id="KW-0805">Transcription regulation</keyword>
<keyword id="KW-0862">Zinc</keyword>
<keyword id="KW-0863">Zinc-finger</keyword>
<protein>
    <recommendedName>
        <fullName>Zinc finger protein GLI4</fullName>
    </recommendedName>
    <alternativeName>
        <fullName>Neural-specific DNA-binding protein xGLI4</fullName>
        <shortName>xGLI-4</shortName>
    </alternativeName>
</protein>
<comment type="function">
    <text>Has an essential role in the early embryonic patterning of mesoderm and neuroectoderm.</text>
</comment>
<comment type="subcellular location">
    <subcellularLocation>
        <location evidence="3">Nucleus</location>
    </subcellularLocation>
</comment>
<comment type="similarity">
    <text evidence="3">Belongs to the GLI C2H2-type zinc-finger protein family.</text>
</comment>
<accession>Q91661</accession>
<evidence type="ECO:0000255" key="1">
    <source>
        <dbReference type="PROSITE-ProRule" id="PRU00042"/>
    </source>
</evidence>
<evidence type="ECO:0000256" key="2">
    <source>
        <dbReference type="SAM" id="MobiDB-lite"/>
    </source>
</evidence>
<evidence type="ECO:0000305" key="3"/>